<gene>
    <name evidence="1" type="primary">apaG</name>
    <name type="ordered locus">ETA_07230</name>
</gene>
<proteinExistence type="inferred from homology"/>
<dbReference type="EMBL" id="CU468135">
    <property type="protein sequence ID" value="CAO95769.1"/>
    <property type="molecule type" value="Genomic_DNA"/>
</dbReference>
<dbReference type="RefSeq" id="WP_012440471.1">
    <property type="nucleotide sequence ID" value="NC_010694.1"/>
</dbReference>
<dbReference type="SMR" id="B2VGP5"/>
<dbReference type="STRING" id="465817.ETA_07230"/>
<dbReference type="KEGG" id="eta:ETA_07230"/>
<dbReference type="eggNOG" id="COG2967">
    <property type="taxonomic scope" value="Bacteria"/>
</dbReference>
<dbReference type="HOGENOM" id="CLU_128074_1_0_6"/>
<dbReference type="OrthoDB" id="9795226at2"/>
<dbReference type="Proteomes" id="UP000001726">
    <property type="component" value="Chromosome"/>
</dbReference>
<dbReference type="GO" id="GO:0070987">
    <property type="term" value="P:error-free translesion synthesis"/>
    <property type="evidence" value="ECO:0007669"/>
    <property type="project" value="TreeGrafter"/>
</dbReference>
<dbReference type="Gene3D" id="2.60.40.1470">
    <property type="entry name" value="ApaG domain"/>
    <property type="match status" value="1"/>
</dbReference>
<dbReference type="HAMAP" id="MF_00791">
    <property type="entry name" value="ApaG"/>
    <property type="match status" value="1"/>
</dbReference>
<dbReference type="InterPro" id="IPR007474">
    <property type="entry name" value="ApaG_domain"/>
</dbReference>
<dbReference type="InterPro" id="IPR036767">
    <property type="entry name" value="ApaG_sf"/>
</dbReference>
<dbReference type="InterPro" id="IPR023065">
    <property type="entry name" value="Uncharacterised_ApaG"/>
</dbReference>
<dbReference type="NCBIfam" id="NF003967">
    <property type="entry name" value="PRK05461.1"/>
    <property type="match status" value="1"/>
</dbReference>
<dbReference type="PANTHER" id="PTHR14289">
    <property type="entry name" value="F-BOX ONLY PROTEIN 3"/>
    <property type="match status" value="1"/>
</dbReference>
<dbReference type="PANTHER" id="PTHR14289:SF16">
    <property type="entry name" value="POLYMERASE DELTA-INTERACTING PROTEIN 2"/>
    <property type="match status" value="1"/>
</dbReference>
<dbReference type="Pfam" id="PF04379">
    <property type="entry name" value="DUF525"/>
    <property type="match status" value="1"/>
</dbReference>
<dbReference type="SUPFAM" id="SSF110069">
    <property type="entry name" value="ApaG-like"/>
    <property type="match status" value="1"/>
</dbReference>
<dbReference type="PROSITE" id="PS51087">
    <property type="entry name" value="APAG"/>
    <property type="match status" value="1"/>
</dbReference>
<reference key="1">
    <citation type="journal article" date="2008" name="Environ. Microbiol.">
        <title>The genome of Erwinia tasmaniensis strain Et1/99, a non-pathogenic bacterium in the genus Erwinia.</title>
        <authorList>
            <person name="Kube M."/>
            <person name="Migdoll A.M."/>
            <person name="Mueller I."/>
            <person name="Kuhl H."/>
            <person name="Beck A."/>
            <person name="Reinhardt R."/>
            <person name="Geider K."/>
        </authorList>
    </citation>
    <scope>NUCLEOTIDE SEQUENCE [LARGE SCALE GENOMIC DNA]</scope>
    <source>
        <strain>DSM 17950 / CFBP 7177 / CIP 109463 / NCPPB 4357 / Et1/99</strain>
    </source>
</reference>
<accession>B2VGP5</accession>
<feature type="chain" id="PRO_1000133791" description="Protein ApaG">
    <location>
        <begin position="1"/>
        <end position="125"/>
    </location>
</feature>
<feature type="domain" description="ApaG" evidence="1">
    <location>
        <begin position="1"/>
        <end position="125"/>
    </location>
</feature>
<protein>
    <recommendedName>
        <fullName evidence="1">Protein ApaG</fullName>
    </recommendedName>
</protein>
<keyword id="KW-1185">Reference proteome</keyword>
<name>APAG_ERWT9</name>
<organism>
    <name type="scientific">Erwinia tasmaniensis (strain DSM 17950 / CFBP 7177 / CIP 109463 / NCPPB 4357 / Et1/99)</name>
    <dbReference type="NCBI Taxonomy" id="465817"/>
    <lineage>
        <taxon>Bacteria</taxon>
        <taxon>Pseudomonadati</taxon>
        <taxon>Pseudomonadota</taxon>
        <taxon>Gammaproteobacteria</taxon>
        <taxon>Enterobacterales</taxon>
        <taxon>Erwiniaceae</taxon>
        <taxon>Erwinia</taxon>
    </lineage>
</organism>
<evidence type="ECO:0000255" key="1">
    <source>
        <dbReference type="HAMAP-Rule" id="MF_00791"/>
    </source>
</evidence>
<sequence length="125" mass="13968">MNDTPRVCVQVQSAYIESQSAPEEERYVFAYAVTIRNVGRIAVQLIGRYWLITNGNGRETEVQGEGVVGEQPHIEPGGEYQYTSGAVLETPIGTMQGHYQMIDADSENFRVEIPVFRLAIATHIH</sequence>